<comment type="subunit">
    <text evidence="1">Part of the 50S ribosomal subunit.</text>
</comment>
<comment type="subcellular location">
    <subcellularLocation>
        <location>Plastid</location>
        <location>Chloroplast</location>
    </subcellularLocation>
</comment>
<comment type="similarity">
    <text evidence="4">Belongs to the universal ribosomal protein uL2 family.</text>
</comment>
<sequence length="274" mass="29923">MAIHLYKTSTPSTRKRAVDSQGKSNPRNHLIYGQHRCGKGRNARGIITAGHRGGGHKRLYRQIDFRRNENNIYGRIVTIEYDPNRNAYICLIHYGDGEKRYILHPRGARIGDTIVSGTEVPIKMGNALPLTNIPLGTAIHNIEITLGKGGQLARAAGAVAKLISKEGKSAAVKLPSGEVRLISQNCSATVGQVGNVGVNRKSLGRAGSKRWLGKRPVVRGVAMNPVDHPHGGGEGKAPIGRKKPATPWGRPALGIRTRKRKKYNDNLILRRRSK</sequence>
<accession>Q06FM3</accession>
<name>RK2_PELHO</name>
<organism>
    <name type="scientific">Pelargonium hortorum</name>
    <name type="common">Common geranium</name>
    <name type="synonym">Pelargonium inquinans x Pelargonium zonale</name>
    <dbReference type="NCBI Taxonomy" id="4031"/>
    <lineage>
        <taxon>Eukaryota</taxon>
        <taxon>Viridiplantae</taxon>
        <taxon>Streptophyta</taxon>
        <taxon>Embryophyta</taxon>
        <taxon>Tracheophyta</taxon>
        <taxon>Spermatophyta</taxon>
        <taxon>Magnoliopsida</taxon>
        <taxon>eudicotyledons</taxon>
        <taxon>Gunneridae</taxon>
        <taxon>Pentapetalae</taxon>
        <taxon>rosids</taxon>
        <taxon>malvids</taxon>
        <taxon>Geraniales</taxon>
        <taxon>Geraniaceae</taxon>
        <taxon>Pelargonium</taxon>
    </lineage>
</organism>
<evidence type="ECO:0000250" key="1"/>
<evidence type="ECO:0000255" key="2">
    <source>
        <dbReference type="HAMAP-Rule" id="MF_01320"/>
    </source>
</evidence>
<evidence type="ECO:0000256" key="3">
    <source>
        <dbReference type="SAM" id="MobiDB-lite"/>
    </source>
</evidence>
<evidence type="ECO:0000305" key="4"/>
<geneLocation type="chloroplast"/>
<reference key="1">
    <citation type="journal article" date="2006" name="Mol. Biol. Evol.">
        <title>The complete chloroplast genome sequence of Pelargonium x hortorum: organization and evolution of the largest and most highly rearranged chloroplast genome of land plants.</title>
        <authorList>
            <person name="Chumley T.W."/>
            <person name="Palmer J.D."/>
            <person name="Mower J.P."/>
            <person name="Fourcade H.M."/>
            <person name="Calie P.J."/>
            <person name="Boore J.L."/>
            <person name="Jansen R.K."/>
        </authorList>
    </citation>
    <scope>NUCLEOTIDE SEQUENCE [LARGE SCALE GENOMIC DNA]</scope>
    <source>
        <strain>cv. Ringo White</strain>
    </source>
</reference>
<feature type="chain" id="PRO_0000277096" description="Large ribosomal subunit protein uL2cz/uL2cy">
    <location>
        <begin position="1"/>
        <end position="274"/>
    </location>
</feature>
<feature type="region of interest" description="Disordered" evidence="3">
    <location>
        <begin position="1"/>
        <end position="33"/>
    </location>
</feature>
<feature type="region of interest" description="Disordered" evidence="3">
    <location>
        <begin position="223"/>
        <end position="265"/>
    </location>
</feature>
<dbReference type="EMBL" id="DQ897681">
    <property type="protein sequence ID" value="ABI17369.1"/>
    <property type="molecule type" value="Genomic_DNA"/>
</dbReference>
<dbReference type="EMBL" id="DQ897681">
    <property type="protein sequence ID" value="ABI17290.1"/>
    <property type="molecule type" value="Genomic_DNA"/>
</dbReference>
<dbReference type="SMR" id="Q06FM3"/>
<dbReference type="GO" id="GO:0009507">
    <property type="term" value="C:chloroplast"/>
    <property type="evidence" value="ECO:0007669"/>
    <property type="project" value="UniProtKB-SubCell"/>
</dbReference>
<dbReference type="GO" id="GO:0005762">
    <property type="term" value="C:mitochondrial large ribosomal subunit"/>
    <property type="evidence" value="ECO:0007669"/>
    <property type="project" value="TreeGrafter"/>
</dbReference>
<dbReference type="GO" id="GO:0019843">
    <property type="term" value="F:rRNA binding"/>
    <property type="evidence" value="ECO:0007669"/>
    <property type="project" value="UniProtKB-UniRule"/>
</dbReference>
<dbReference type="GO" id="GO:0003735">
    <property type="term" value="F:structural constituent of ribosome"/>
    <property type="evidence" value="ECO:0007669"/>
    <property type="project" value="InterPro"/>
</dbReference>
<dbReference type="GO" id="GO:0016740">
    <property type="term" value="F:transferase activity"/>
    <property type="evidence" value="ECO:0007669"/>
    <property type="project" value="InterPro"/>
</dbReference>
<dbReference type="GO" id="GO:0032543">
    <property type="term" value="P:mitochondrial translation"/>
    <property type="evidence" value="ECO:0007669"/>
    <property type="project" value="TreeGrafter"/>
</dbReference>
<dbReference type="FunFam" id="4.10.950.10:FF:000001">
    <property type="entry name" value="50S ribosomal protein L2"/>
    <property type="match status" value="1"/>
</dbReference>
<dbReference type="FunFam" id="2.30.30.30:FF:000008">
    <property type="entry name" value="50S ribosomal protein L2, chloroplastic"/>
    <property type="match status" value="1"/>
</dbReference>
<dbReference type="FunFam" id="2.40.50.140:FF:000029">
    <property type="entry name" value="50S ribosomal protein L2, chloroplastic"/>
    <property type="match status" value="1"/>
</dbReference>
<dbReference type="Gene3D" id="2.30.30.30">
    <property type="match status" value="1"/>
</dbReference>
<dbReference type="Gene3D" id="2.40.50.140">
    <property type="entry name" value="Nucleic acid-binding proteins"/>
    <property type="match status" value="1"/>
</dbReference>
<dbReference type="Gene3D" id="4.10.950.10">
    <property type="entry name" value="Ribosomal protein L2, domain 3"/>
    <property type="match status" value="1"/>
</dbReference>
<dbReference type="HAMAP" id="MF_01320_B">
    <property type="entry name" value="Ribosomal_uL2_B"/>
    <property type="match status" value="1"/>
</dbReference>
<dbReference type="InterPro" id="IPR012340">
    <property type="entry name" value="NA-bd_OB-fold"/>
</dbReference>
<dbReference type="InterPro" id="IPR014722">
    <property type="entry name" value="Rib_uL2_dom2"/>
</dbReference>
<dbReference type="InterPro" id="IPR002171">
    <property type="entry name" value="Ribosomal_uL2"/>
</dbReference>
<dbReference type="InterPro" id="IPR005880">
    <property type="entry name" value="Ribosomal_uL2_bac/org-type"/>
</dbReference>
<dbReference type="InterPro" id="IPR022669">
    <property type="entry name" value="Ribosomal_uL2_C"/>
</dbReference>
<dbReference type="InterPro" id="IPR022671">
    <property type="entry name" value="Ribosomal_uL2_CS"/>
</dbReference>
<dbReference type="InterPro" id="IPR014726">
    <property type="entry name" value="Ribosomal_uL2_dom3"/>
</dbReference>
<dbReference type="InterPro" id="IPR022666">
    <property type="entry name" value="Ribosomal_uL2_RNA-bd_dom"/>
</dbReference>
<dbReference type="InterPro" id="IPR008991">
    <property type="entry name" value="Translation_prot_SH3-like_sf"/>
</dbReference>
<dbReference type="NCBIfam" id="TIGR01171">
    <property type="entry name" value="rplB_bact"/>
    <property type="match status" value="1"/>
</dbReference>
<dbReference type="PANTHER" id="PTHR13691:SF5">
    <property type="entry name" value="LARGE RIBOSOMAL SUBUNIT PROTEIN UL2M"/>
    <property type="match status" value="1"/>
</dbReference>
<dbReference type="PANTHER" id="PTHR13691">
    <property type="entry name" value="RIBOSOMAL PROTEIN L2"/>
    <property type="match status" value="1"/>
</dbReference>
<dbReference type="Pfam" id="PF00181">
    <property type="entry name" value="Ribosomal_L2"/>
    <property type="match status" value="1"/>
</dbReference>
<dbReference type="Pfam" id="PF03947">
    <property type="entry name" value="Ribosomal_L2_C"/>
    <property type="match status" value="1"/>
</dbReference>
<dbReference type="PIRSF" id="PIRSF002158">
    <property type="entry name" value="Ribosomal_L2"/>
    <property type="match status" value="1"/>
</dbReference>
<dbReference type="SMART" id="SM01383">
    <property type="entry name" value="Ribosomal_L2"/>
    <property type="match status" value="1"/>
</dbReference>
<dbReference type="SMART" id="SM01382">
    <property type="entry name" value="Ribosomal_L2_C"/>
    <property type="match status" value="1"/>
</dbReference>
<dbReference type="SUPFAM" id="SSF50249">
    <property type="entry name" value="Nucleic acid-binding proteins"/>
    <property type="match status" value="1"/>
</dbReference>
<dbReference type="SUPFAM" id="SSF50104">
    <property type="entry name" value="Translation proteins SH3-like domain"/>
    <property type="match status" value="1"/>
</dbReference>
<dbReference type="PROSITE" id="PS00467">
    <property type="entry name" value="RIBOSOMAL_L2"/>
    <property type="match status" value="1"/>
</dbReference>
<gene>
    <name type="primary">rpl2-A</name>
</gene>
<gene>
    <name type="primary">rpl2-B</name>
</gene>
<keyword id="KW-0150">Chloroplast</keyword>
<keyword id="KW-0934">Plastid</keyword>
<keyword id="KW-0687">Ribonucleoprotein</keyword>
<keyword id="KW-0689">Ribosomal protein</keyword>
<protein>
    <recommendedName>
        <fullName evidence="2">Large ribosomal subunit protein uL2cz/uL2cy</fullName>
    </recommendedName>
    <alternativeName>
        <fullName evidence="4">50S ribosomal protein L2, chloroplastic</fullName>
    </alternativeName>
</protein>
<proteinExistence type="inferred from homology"/>